<proteinExistence type="inferred from homology"/>
<keyword id="KW-0240">DNA-directed RNA polymerase</keyword>
<keyword id="KW-0548">Nucleotidyltransferase</keyword>
<keyword id="KW-1185">Reference proteome</keyword>
<keyword id="KW-0804">Transcription</keyword>
<keyword id="KW-0808">Transferase</keyword>
<reference key="1">
    <citation type="journal article" date="2002" name="Proc. Natl. Acad. Sci. U.S.A.">
        <title>Genome sequence of Streptococcus mutans UA159, a cariogenic dental pathogen.</title>
        <authorList>
            <person name="Ajdic D.J."/>
            <person name="McShan W.M."/>
            <person name="McLaughlin R.E."/>
            <person name="Savic G."/>
            <person name="Chang J."/>
            <person name="Carson M.B."/>
            <person name="Primeaux C."/>
            <person name="Tian R."/>
            <person name="Kenton S."/>
            <person name="Jia H.G."/>
            <person name="Lin S.P."/>
            <person name="Qian Y."/>
            <person name="Li S."/>
            <person name="Zhu H."/>
            <person name="Najar F.Z."/>
            <person name="Lai H."/>
            <person name="White J."/>
            <person name="Roe B.A."/>
            <person name="Ferretti J.J."/>
        </authorList>
    </citation>
    <scope>NUCLEOTIDE SEQUENCE [LARGE SCALE GENOMIC DNA]</scope>
    <source>
        <strain>ATCC 700610 / UA159</strain>
    </source>
</reference>
<sequence length="105" mass="11731">MMLKPSIDTLLDKVPSKYSLVILQAKRAHELESGATPTQAFTSVKPTLQALEEIEAGNVVIHPDPEAKRAAVRARAEAERIAKEEEERKIKEQIAKEKEEEGEKI</sequence>
<comment type="function">
    <text evidence="1">Promotes RNA polymerase assembly. Latches the N- and C-terminal regions of the beta' subunit thereby facilitating its interaction with the beta and alpha subunits.</text>
</comment>
<comment type="catalytic activity">
    <reaction evidence="1">
        <text>RNA(n) + a ribonucleoside 5'-triphosphate = RNA(n+1) + diphosphate</text>
        <dbReference type="Rhea" id="RHEA:21248"/>
        <dbReference type="Rhea" id="RHEA-COMP:14527"/>
        <dbReference type="Rhea" id="RHEA-COMP:17342"/>
        <dbReference type="ChEBI" id="CHEBI:33019"/>
        <dbReference type="ChEBI" id="CHEBI:61557"/>
        <dbReference type="ChEBI" id="CHEBI:140395"/>
        <dbReference type="EC" id="2.7.7.6"/>
    </reaction>
</comment>
<comment type="subunit">
    <text evidence="1">The RNAP catalytic core consists of 2 alpha, 1 beta, 1 beta' and 1 omega subunit. When a sigma factor is associated with the core the holoenzyme is formed, which can initiate transcription.</text>
</comment>
<comment type="similarity">
    <text evidence="1">Belongs to the RNA polymerase subunit omega family.</text>
</comment>
<dbReference type="EC" id="2.7.7.6" evidence="1"/>
<dbReference type="EMBL" id="AE014133">
    <property type="protein sequence ID" value="AAN58225.1"/>
    <property type="molecule type" value="Genomic_DNA"/>
</dbReference>
<dbReference type="RefSeq" id="NP_720919.1">
    <property type="nucleotide sequence ID" value="NC_004350.2"/>
</dbReference>
<dbReference type="RefSeq" id="WP_002263044.1">
    <property type="nucleotide sequence ID" value="NC_004350.2"/>
</dbReference>
<dbReference type="SMR" id="Q8DVK5"/>
<dbReference type="STRING" id="210007.SMU_479"/>
<dbReference type="GeneID" id="93859953"/>
<dbReference type="KEGG" id="smu:SMU_479"/>
<dbReference type="PATRIC" id="fig|210007.7.peg.419"/>
<dbReference type="eggNOG" id="COG1758">
    <property type="taxonomic scope" value="Bacteria"/>
</dbReference>
<dbReference type="HOGENOM" id="CLU_125406_0_0_9"/>
<dbReference type="OrthoDB" id="9815459at2"/>
<dbReference type="PhylomeDB" id="Q8DVK5"/>
<dbReference type="Proteomes" id="UP000002512">
    <property type="component" value="Chromosome"/>
</dbReference>
<dbReference type="GO" id="GO:0000428">
    <property type="term" value="C:DNA-directed RNA polymerase complex"/>
    <property type="evidence" value="ECO:0007669"/>
    <property type="project" value="UniProtKB-KW"/>
</dbReference>
<dbReference type="GO" id="GO:0003677">
    <property type="term" value="F:DNA binding"/>
    <property type="evidence" value="ECO:0007669"/>
    <property type="project" value="UniProtKB-UniRule"/>
</dbReference>
<dbReference type="GO" id="GO:0003899">
    <property type="term" value="F:DNA-directed RNA polymerase activity"/>
    <property type="evidence" value="ECO:0007669"/>
    <property type="project" value="UniProtKB-UniRule"/>
</dbReference>
<dbReference type="GO" id="GO:0006351">
    <property type="term" value="P:DNA-templated transcription"/>
    <property type="evidence" value="ECO:0007669"/>
    <property type="project" value="UniProtKB-UniRule"/>
</dbReference>
<dbReference type="Gene3D" id="3.90.940.10">
    <property type="match status" value="1"/>
</dbReference>
<dbReference type="HAMAP" id="MF_00366">
    <property type="entry name" value="RNApol_bact_RpoZ"/>
    <property type="match status" value="1"/>
</dbReference>
<dbReference type="InterPro" id="IPR003716">
    <property type="entry name" value="DNA-dir_RNA_pol_omega"/>
</dbReference>
<dbReference type="InterPro" id="IPR006110">
    <property type="entry name" value="Pol_omega/Rpo6/RPB6"/>
</dbReference>
<dbReference type="InterPro" id="IPR036161">
    <property type="entry name" value="RPB6/omega-like_sf"/>
</dbReference>
<dbReference type="NCBIfam" id="TIGR00690">
    <property type="entry name" value="rpoZ"/>
    <property type="match status" value="1"/>
</dbReference>
<dbReference type="PANTHER" id="PTHR34476">
    <property type="entry name" value="DNA-DIRECTED RNA POLYMERASE SUBUNIT OMEGA"/>
    <property type="match status" value="1"/>
</dbReference>
<dbReference type="PANTHER" id="PTHR34476:SF1">
    <property type="entry name" value="DNA-DIRECTED RNA POLYMERASE SUBUNIT OMEGA"/>
    <property type="match status" value="1"/>
</dbReference>
<dbReference type="Pfam" id="PF01192">
    <property type="entry name" value="RNA_pol_Rpb6"/>
    <property type="match status" value="1"/>
</dbReference>
<dbReference type="SMART" id="SM01409">
    <property type="entry name" value="RNA_pol_Rpb6"/>
    <property type="match status" value="1"/>
</dbReference>
<dbReference type="SUPFAM" id="SSF63562">
    <property type="entry name" value="RPB6/omega subunit-like"/>
    <property type="match status" value="1"/>
</dbReference>
<protein>
    <recommendedName>
        <fullName evidence="1">DNA-directed RNA polymerase subunit omega</fullName>
        <shortName evidence="1">RNAP omega subunit</shortName>
        <ecNumber evidence="1">2.7.7.6</ecNumber>
    </recommendedName>
    <alternativeName>
        <fullName evidence="1">RNA polymerase omega subunit</fullName>
    </alternativeName>
    <alternativeName>
        <fullName evidence="1">Transcriptase subunit omega</fullName>
    </alternativeName>
</protein>
<gene>
    <name evidence="1" type="primary">rpoZ</name>
    <name type="ordered locus">SMU_479</name>
</gene>
<name>RPOZ_STRMU</name>
<organism>
    <name type="scientific">Streptococcus mutans serotype c (strain ATCC 700610 / UA159)</name>
    <dbReference type="NCBI Taxonomy" id="210007"/>
    <lineage>
        <taxon>Bacteria</taxon>
        <taxon>Bacillati</taxon>
        <taxon>Bacillota</taxon>
        <taxon>Bacilli</taxon>
        <taxon>Lactobacillales</taxon>
        <taxon>Streptococcaceae</taxon>
        <taxon>Streptococcus</taxon>
    </lineage>
</organism>
<evidence type="ECO:0000255" key="1">
    <source>
        <dbReference type="HAMAP-Rule" id="MF_00366"/>
    </source>
</evidence>
<accession>Q8DVK5</accession>
<feature type="chain" id="PRO_0000128992" description="DNA-directed RNA polymerase subunit omega">
    <location>
        <begin position="1"/>
        <end position="105"/>
    </location>
</feature>